<keyword id="KW-0484">Methanogenesis</keyword>
<keyword id="KW-1185">Reference proteome</keyword>
<proteinExistence type="evidence at transcript level"/>
<comment type="subunit">
    <text>MCR is composed of three subunits: alpha, beta, and gamma. The function of proteins C and D is not known.</text>
</comment>
<comment type="developmental stage">
    <text>There are two MCR complexes in this bacteria. MCR II is expressed in the early growth phase. Late growth cells contains mostly MCR I.</text>
</comment>
<accession>O27235</accession>
<dbReference type="EMBL" id="AE000666">
    <property type="protein sequence ID" value="AAB85656.1"/>
    <property type="molecule type" value="Genomic_DNA"/>
</dbReference>
<dbReference type="PIR" id="E69022">
    <property type="entry name" value="E69022"/>
</dbReference>
<dbReference type="RefSeq" id="WP_010876791.1">
    <property type="nucleotide sequence ID" value="NC_000916.1"/>
</dbReference>
<dbReference type="SMR" id="O27235"/>
<dbReference type="STRING" id="187420.MTH_1167"/>
<dbReference type="PaxDb" id="187420-MTH_1167"/>
<dbReference type="DNASU" id="1471575"/>
<dbReference type="EnsemblBacteria" id="AAB85656">
    <property type="protein sequence ID" value="AAB85656"/>
    <property type="gene ID" value="MTH_1167"/>
</dbReference>
<dbReference type="GeneID" id="1471575"/>
<dbReference type="GeneID" id="77403579"/>
<dbReference type="KEGG" id="mth:MTH_1167"/>
<dbReference type="PATRIC" id="fig|187420.15.peg.1144"/>
<dbReference type="HOGENOM" id="CLU_118415_0_0_2"/>
<dbReference type="InParanoid" id="O27235"/>
<dbReference type="Proteomes" id="UP000005223">
    <property type="component" value="Chromosome"/>
</dbReference>
<dbReference type="GO" id="GO:0015948">
    <property type="term" value="P:methanogenesis"/>
    <property type="evidence" value="ECO:0007669"/>
    <property type="project" value="UniProtKB-KW"/>
</dbReference>
<dbReference type="InterPro" id="IPR003901">
    <property type="entry name" value="Me_CoM_Rdtase_D"/>
</dbReference>
<dbReference type="NCBIfam" id="TIGR03260">
    <property type="entry name" value="met_CoM_red_D"/>
    <property type="match status" value="1"/>
</dbReference>
<dbReference type="Pfam" id="PF02505">
    <property type="entry name" value="MCR_D"/>
    <property type="match status" value="1"/>
</dbReference>
<dbReference type="PIRSF" id="PIRSF005636">
    <property type="entry name" value="McrD"/>
    <property type="match status" value="1"/>
</dbReference>
<feature type="chain" id="PRO_0000147496" description="Methyl-coenzyme M reductase I operon protein D">
    <location>
        <begin position="1"/>
        <end position="145"/>
    </location>
</feature>
<reference key="1">
    <citation type="journal article" date="1997" name="J. Bacteriol.">
        <title>Complete genome sequence of Methanobacterium thermoautotrophicum deltaH: functional analysis and comparative genomics.</title>
        <authorList>
            <person name="Smith D.R."/>
            <person name="Doucette-Stamm L.A."/>
            <person name="Deloughery C."/>
            <person name="Lee H.-M."/>
            <person name="Dubois J."/>
            <person name="Aldredge T."/>
            <person name="Bashirzadeh R."/>
            <person name="Blakely D."/>
            <person name="Cook R."/>
            <person name="Gilbert K."/>
            <person name="Harrison D."/>
            <person name="Hoang L."/>
            <person name="Keagle P."/>
            <person name="Lumm W."/>
            <person name="Pothier B."/>
            <person name="Qiu D."/>
            <person name="Spadafora R."/>
            <person name="Vicare R."/>
            <person name="Wang Y."/>
            <person name="Wierzbowski J."/>
            <person name="Gibson R."/>
            <person name="Jiwani N."/>
            <person name="Caruso A."/>
            <person name="Bush D."/>
            <person name="Safer H."/>
            <person name="Patwell D."/>
            <person name="Prabhakar S."/>
            <person name="McDougall S."/>
            <person name="Shimer G."/>
            <person name="Goyal A."/>
            <person name="Pietrovski S."/>
            <person name="Church G.M."/>
            <person name="Daniels C.J."/>
            <person name="Mao J.-I."/>
            <person name="Rice P."/>
            <person name="Noelling J."/>
            <person name="Reeve J.N."/>
        </authorList>
    </citation>
    <scope>NUCLEOTIDE SEQUENCE [LARGE SCALE GENOMIC DNA]</scope>
    <source>
        <strain>ATCC 29096 / DSM 1053 / JCM 10044 / NBRC 100330 / Delta H</strain>
    </source>
</reference>
<organism>
    <name type="scientific">Methanothermobacter thermautotrophicus (strain ATCC 29096 / DSM 1053 / JCM 10044 / NBRC 100330 / Delta H)</name>
    <name type="common">Methanobacterium thermoautotrophicum</name>
    <dbReference type="NCBI Taxonomy" id="187420"/>
    <lineage>
        <taxon>Archaea</taxon>
        <taxon>Methanobacteriati</taxon>
        <taxon>Methanobacteriota</taxon>
        <taxon>Methanomada group</taxon>
        <taxon>Methanobacteria</taxon>
        <taxon>Methanobacteriales</taxon>
        <taxon>Methanobacteriaceae</taxon>
        <taxon>Methanothermobacter</taxon>
    </lineage>
</organism>
<gene>
    <name type="primary">mcrD</name>
    <name type="ordered locus">MTH_1167</name>
</gene>
<protein>
    <recommendedName>
        <fullName>Methyl-coenzyme M reductase I operon protein D</fullName>
    </recommendedName>
</protein>
<name>MCRD_METTH</name>
<sequence length="145" mass="16739">MDVQIFPHRLLGADTTEKLLNRLEDISGVKRMVIHGQRLPPEDHPDRRIISVKGHEFELQVKTGRVLLEIEDEDTIADIKRVCEDLLPFGYDVTPGKYIRTQKTVTDEIKYGEDLDKVPEELIGLTDQNARLSERATIIKRKKEH</sequence>